<proteinExistence type="evidence at protein level"/>
<comment type="subunit">
    <text>Part of the 50S ribosomal subunit.</text>
</comment>
<comment type="similarity">
    <text evidence="1">Belongs to the universal ribosomal protein uL10 family.</text>
</comment>
<evidence type="ECO:0000305" key="1"/>
<accession>Q9RSS9</accession>
<keyword id="KW-1185">Reference proteome</keyword>
<keyword id="KW-0687">Ribonucleoprotein</keyword>
<keyword id="KW-0689">Ribosomal protein</keyword>
<sequence>MANEKNQQTLGSLKDSLQGIETFYVVDYQGLTAGQLTQLRKDIREKGGQLIVAKNTLLNLALQEGGRDFDDALKGPSALVLAQEDPAGVAKALSDAAGRNDRGIPTVKGGFVEGSKVDVAVVQRLASLGSKTTLQAELVGVLSAHLSNFVGILEAYREKLEGEGGSESA</sequence>
<protein>
    <recommendedName>
        <fullName evidence="1">Large ribosomal subunit protein uL10</fullName>
    </recommendedName>
    <alternativeName>
        <fullName>50S ribosomal protein L10</fullName>
    </alternativeName>
</protein>
<dbReference type="EMBL" id="AE000513">
    <property type="protein sequence ID" value="AAF11591.1"/>
    <property type="molecule type" value="Genomic_DNA"/>
</dbReference>
<dbReference type="PIR" id="E75323">
    <property type="entry name" value="E75323"/>
</dbReference>
<dbReference type="RefSeq" id="NP_295767.1">
    <property type="nucleotide sequence ID" value="NC_001263.1"/>
</dbReference>
<dbReference type="RefSeq" id="WP_010888676.1">
    <property type="nucleotide sequence ID" value="NC_001263.1"/>
</dbReference>
<dbReference type="SMR" id="Q9RSS9"/>
<dbReference type="FunCoup" id="Q9RSS9">
    <property type="interactions" value="446"/>
</dbReference>
<dbReference type="STRING" id="243230.DR_2044"/>
<dbReference type="PaxDb" id="243230-DR_2044"/>
<dbReference type="EnsemblBacteria" id="AAF11591">
    <property type="protein sequence ID" value="AAF11591"/>
    <property type="gene ID" value="DR_2044"/>
</dbReference>
<dbReference type="GeneID" id="69518283"/>
<dbReference type="KEGG" id="dra:DR_2044"/>
<dbReference type="PATRIC" id="fig|243230.17.peg.2271"/>
<dbReference type="eggNOG" id="COG0244">
    <property type="taxonomic scope" value="Bacteria"/>
</dbReference>
<dbReference type="HOGENOM" id="CLU_092227_1_2_0"/>
<dbReference type="InParanoid" id="Q9RSS9"/>
<dbReference type="OrthoDB" id="9808307at2"/>
<dbReference type="Proteomes" id="UP000002524">
    <property type="component" value="Chromosome 1"/>
</dbReference>
<dbReference type="GO" id="GO:0022625">
    <property type="term" value="C:cytosolic large ribosomal subunit"/>
    <property type="evidence" value="ECO:0000318"/>
    <property type="project" value="GO_Central"/>
</dbReference>
<dbReference type="GO" id="GO:0070180">
    <property type="term" value="F:large ribosomal subunit rRNA binding"/>
    <property type="evidence" value="ECO:0007669"/>
    <property type="project" value="UniProtKB-UniRule"/>
</dbReference>
<dbReference type="GO" id="GO:0003735">
    <property type="term" value="F:structural constituent of ribosome"/>
    <property type="evidence" value="ECO:0000318"/>
    <property type="project" value="GO_Central"/>
</dbReference>
<dbReference type="GO" id="GO:0006412">
    <property type="term" value="P:translation"/>
    <property type="evidence" value="ECO:0000318"/>
    <property type="project" value="GO_Central"/>
</dbReference>
<dbReference type="CDD" id="cd05797">
    <property type="entry name" value="Ribosomal_L10"/>
    <property type="match status" value="1"/>
</dbReference>
<dbReference type="Gene3D" id="3.30.70.1730">
    <property type="match status" value="1"/>
</dbReference>
<dbReference type="HAMAP" id="MF_00362">
    <property type="entry name" value="Ribosomal_uL10"/>
    <property type="match status" value="1"/>
</dbReference>
<dbReference type="InterPro" id="IPR001790">
    <property type="entry name" value="Ribosomal_uL10"/>
</dbReference>
<dbReference type="InterPro" id="IPR043141">
    <property type="entry name" value="Ribosomal_uL10-like_sf"/>
</dbReference>
<dbReference type="InterPro" id="IPR022973">
    <property type="entry name" value="Ribosomal_uL10_bac"/>
</dbReference>
<dbReference type="InterPro" id="IPR047865">
    <property type="entry name" value="Ribosomal_uL10_bac_type"/>
</dbReference>
<dbReference type="InterPro" id="IPR002363">
    <property type="entry name" value="Ribosomal_uL10_CS_bac"/>
</dbReference>
<dbReference type="NCBIfam" id="NF000955">
    <property type="entry name" value="PRK00099.1-1"/>
    <property type="match status" value="1"/>
</dbReference>
<dbReference type="PANTHER" id="PTHR11560">
    <property type="entry name" value="39S RIBOSOMAL PROTEIN L10, MITOCHONDRIAL"/>
    <property type="match status" value="1"/>
</dbReference>
<dbReference type="Pfam" id="PF00466">
    <property type="entry name" value="Ribosomal_L10"/>
    <property type="match status" value="1"/>
</dbReference>
<dbReference type="SUPFAM" id="SSF160369">
    <property type="entry name" value="Ribosomal protein L10-like"/>
    <property type="match status" value="1"/>
</dbReference>
<dbReference type="PROSITE" id="PS01109">
    <property type="entry name" value="RIBOSOMAL_L10"/>
    <property type="match status" value="1"/>
</dbReference>
<reference key="1">
    <citation type="journal article" date="1999" name="Science">
        <title>Genome sequence of the radioresistant bacterium Deinococcus radiodurans R1.</title>
        <authorList>
            <person name="White O."/>
            <person name="Eisen J.A."/>
            <person name="Heidelberg J.F."/>
            <person name="Hickey E.K."/>
            <person name="Peterson J.D."/>
            <person name="Dodson R.J."/>
            <person name="Haft D.H."/>
            <person name="Gwinn M.L."/>
            <person name="Nelson W.C."/>
            <person name="Richardson D.L."/>
            <person name="Moffat K.S."/>
            <person name="Qin H."/>
            <person name="Jiang L."/>
            <person name="Pamphile W."/>
            <person name="Crosby M."/>
            <person name="Shen M."/>
            <person name="Vamathevan J.J."/>
            <person name="Lam P."/>
            <person name="McDonald L.A."/>
            <person name="Utterback T.R."/>
            <person name="Zalewski C."/>
            <person name="Makarova K.S."/>
            <person name="Aravind L."/>
            <person name="Daly M.J."/>
            <person name="Minton K.W."/>
            <person name="Fleischmann R.D."/>
            <person name="Ketchum K.A."/>
            <person name="Nelson K.E."/>
            <person name="Salzberg S.L."/>
            <person name="Smith H.O."/>
            <person name="Venter J.C."/>
            <person name="Fraser C.M."/>
        </authorList>
    </citation>
    <scope>NUCLEOTIDE SEQUENCE [LARGE SCALE GENOMIC DNA]</scope>
    <source>
        <strain>ATCC 13939 / DSM 20539 / JCM 16871 / CCUG 27074 / LMG 4051 / NBRC 15346 / NCIMB 9279 / VKM B-1422 / R1</strain>
    </source>
</reference>
<reference key="2">
    <citation type="journal article" date="2001" name="Cell">
        <title>High resolution structure of the large ribosomal subunit from a mesophilic eubacterium.</title>
        <authorList>
            <person name="Harms J."/>
            <person name="Schluenzen F."/>
            <person name="Zarivach R."/>
            <person name="Bashan A."/>
            <person name="Gat S."/>
            <person name="Agmon I."/>
            <person name="Bartels H."/>
            <person name="Franceschi F."/>
            <person name="Yonath A."/>
        </authorList>
    </citation>
    <scope>STRUCTURE OF THE 50S SUBUNIT</scope>
    <source>
        <strain>ATCC 13939 / DSM 20539 / JCM 16871 / CCUG 27074 / LMG 4051 / NBRC 15346 / NCIMB 9279 / VKM B-1422 / R1</strain>
    </source>
</reference>
<gene>
    <name type="primary">rplJ</name>
    <name type="ordered locus">DR_2044</name>
</gene>
<name>RL10_DEIRA</name>
<feature type="chain" id="PRO_0000154624" description="Large ribosomal subunit protein uL10">
    <location>
        <begin position="1"/>
        <end position="169"/>
    </location>
</feature>
<organism>
    <name type="scientific">Deinococcus radiodurans (strain ATCC 13939 / DSM 20539 / JCM 16871 / CCUG 27074 / LMG 4051 / NBRC 15346 / NCIMB 9279 / VKM B-1422 / R1)</name>
    <dbReference type="NCBI Taxonomy" id="243230"/>
    <lineage>
        <taxon>Bacteria</taxon>
        <taxon>Thermotogati</taxon>
        <taxon>Deinococcota</taxon>
        <taxon>Deinococci</taxon>
        <taxon>Deinococcales</taxon>
        <taxon>Deinococcaceae</taxon>
        <taxon>Deinococcus</taxon>
    </lineage>
</organism>